<accession>Q9PJB1</accession>
<sequence>MLSKEGDFSKEQRERLSHFVTNLDSPIFALKNLPEVVKGALFSKYSRSILGLRALLLKEFLDGEGGDFLSEDLQDCELGIQKAADFYRRVLDNFGDDSVGELGGAHLAIEQVSMLAAKVLEDARIGGSPLEKSSRYVYFDQKVNGEYLYYRDPILMTSAFKDTFLDTCDFLFNTYSELIPQVRAYFEKIYPKDPEVSQSAYTVSLRAKVLDCLRGLLPAATLTNLGFFGNGRFWQNLLHRLQDNNLVEVRNIGEQALTELMKIIPSFVSRAEPHHHHHQAMVDYHLGLREQLKSFAQRYGEEREPSLEKGVKLVYGDPDGLYKIAAASMFPYSEHTYADLLDICRKIPDEDLMLILESSASSRENRRHKSPRGLECAEFAFDITADFGAYRDLQRHRILTQERQLLTTKLGYSIPQQLLDTPMEAPFREAMEKADQAYRLIAAEFPEEAQYVVPLAYNIRWLFHINTRGLQWLCELRSQPQGHESYRQIAIDMAKEVIQFHPAYKSFLKFVDYSETDLGRLKQESRRKA</sequence>
<gene>
    <name type="ordered locus">TC_0921</name>
</gene>
<evidence type="ECO:0000255" key="1">
    <source>
        <dbReference type="PROSITE-ProRule" id="PRU00661"/>
    </source>
</evidence>
<evidence type="ECO:0000305" key="2"/>
<feature type="chain" id="PRO_0000220642" description="UPF0159 protein TC_0921">
    <location>
        <begin position="1"/>
        <end position="529"/>
    </location>
</feature>
<feature type="domain" description="ThyX 1" evidence="1">
    <location>
        <begin position="38"/>
        <end position="274"/>
    </location>
</feature>
<feature type="domain" description="ThyX 2" evidence="1">
    <location>
        <begin position="309"/>
        <end position="511"/>
    </location>
</feature>
<keyword id="KW-0677">Repeat</keyword>
<organism>
    <name type="scientific">Chlamydia muridarum (strain MoPn / Nigg)</name>
    <dbReference type="NCBI Taxonomy" id="243161"/>
    <lineage>
        <taxon>Bacteria</taxon>
        <taxon>Pseudomonadati</taxon>
        <taxon>Chlamydiota</taxon>
        <taxon>Chlamydiia</taxon>
        <taxon>Chlamydiales</taxon>
        <taxon>Chlamydiaceae</taxon>
        <taxon>Chlamydia/Chlamydophila group</taxon>
        <taxon>Chlamydia</taxon>
    </lineage>
</organism>
<reference key="1">
    <citation type="journal article" date="2000" name="Nucleic Acids Res.">
        <title>Genome sequences of Chlamydia trachomatis MoPn and Chlamydia pneumoniae AR39.</title>
        <authorList>
            <person name="Read T.D."/>
            <person name="Brunham R.C."/>
            <person name="Shen C."/>
            <person name="Gill S.R."/>
            <person name="Heidelberg J.F."/>
            <person name="White O."/>
            <person name="Hickey E.K."/>
            <person name="Peterson J.D."/>
            <person name="Utterback T.R."/>
            <person name="Berry K.J."/>
            <person name="Bass S."/>
            <person name="Linher K.D."/>
            <person name="Weidman J.F."/>
            <person name="Khouri H.M."/>
            <person name="Craven B."/>
            <person name="Bowman C."/>
            <person name="Dodson R.J."/>
            <person name="Gwinn M.L."/>
            <person name="Nelson W.C."/>
            <person name="DeBoy R.T."/>
            <person name="Kolonay J.F."/>
            <person name="McClarty G."/>
            <person name="Salzberg S.L."/>
            <person name="Eisen J.A."/>
            <person name="Fraser C.M."/>
        </authorList>
    </citation>
    <scope>NUCLEOTIDE SEQUENCE [LARGE SCALE GENOMIC DNA]</scope>
    <source>
        <strain>MoPn / Nigg</strain>
    </source>
</reference>
<name>Y921_CHLMU</name>
<proteinExistence type="inferred from homology"/>
<protein>
    <recommendedName>
        <fullName>UPF0159 protein TC_0921</fullName>
    </recommendedName>
</protein>
<comment type="similarity">
    <text evidence="2">Belongs to the UPF0159 family.</text>
</comment>
<dbReference type="EMBL" id="AE002160">
    <property type="protein sequence ID" value="AAF39712.1"/>
    <property type="molecule type" value="Genomic_DNA"/>
</dbReference>
<dbReference type="PIR" id="H81650">
    <property type="entry name" value="H81650"/>
</dbReference>
<dbReference type="RefSeq" id="WP_010231946.1">
    <property type="nucleotide sequence ID" value="NZ_CP063055.1"/>
</dbReference>
<dbReference type="GeneID" id="1246291"/>
<dbReference type="KEGG" id="cmu:TC_0921"/>
<dbReference type="eggNOG" id="COG1351">
    <property type="taxonomic scope" value="Bacteria"/>
</dbReference>
<dbReference type="HOGENOM" id="CLU_024745_0_0_0"/>
<dbReference type="OrthoDB" id="9780625at2"/>
<dbReference type="Proteomes" id="UP000000800">
    <property type="component" value="Chromosome"/>
</dbReference>
<dbReference type="GO" id="GO:0050660">
    <property type="term" value="F:flavin adenine dinucleotide binding"/>
    <property type="evidence" value="ECO:0007669"/>
    <property type="project" value="InterPro"/>
</dbReference>
<dbReference type="GO" id="GO:0070402">
    <property type="term" value="F:NADPH binding"/>
    <property type="evidence" value="ECO:0007669"/>
    <property type="project" value="TreeGrafter"/>
</dbReference>
<dbReference type="GO" id="GO:0050797">
    <property type="term" value="F:thymidylate synthase (FAD) activity"/>
    <property type="evidence" value="ECO:0007669"/>
    <property type="project" value="InterPro"/>
</dbReference>
<dbReference type="GO" id="GO:0004799">
    <property type="term" value="F:thymidylate synthase activity"/>
    <property type="evidence" value="ECO:0007669"/>
    <property type="project" value="TreeGrafter"/>
</dbReference>
<dbReference type="GO" id="GO:0006231">
    <property type="term" value="P:dTMP biosynthetic process"/>
    <property type="evidence" value="ECO:0007669"/>
    <property type="project" value="InterPro"/>
</dbReference>
<dbReference type="CDD" id="cd20175">
    <property type="entry name" value="ThyX"/>
    <property type="match status" value="1"/>
</dbReference>
<dbReference type="Gene3D" id="3.30.1360.170">
    <property type="match status" value="2"/>
</dbReference>
<dbReference type="InterPro" id="IPR003669">
    <property type="entry name" value="Thymidylate_synthase_ThyX"/>
</dbReference>
<dbReference type="InterPro" id="IPR036098">
    <property type="entry name" value="Thymidylate_synthase_ThyX_sf"/>
</dbReference>
<dbReference type="PANTHER" id="PTHR34934">
    <property type="entry name" value="FLAVIN-DEPENDENT THYMIDYLATE SYNTHASE"/>
    <property type="match status" value="1"/>
</dbReference>
<dbReference type="PANTHER" id="PTHR34934:SF1">
    <property type="entry name" value="FLAVIN-DEPENDENT THYMIDYLATE SYNTHASE"/>
    <property type="match status" value="1"/>
</dbReference>
<dbReference type="Pfam" id="PF02511">
    <property type="entry name" value="Thy1"/>
    <property type="match status" value="2"/>
</dbReference>
<dbReference type="SUPFAM" id="SSF69796">
    <property type="entry name" value="Thymidylate synthase-complementing protein Thy1"/>
    <property type="match status" value="2"/>
</dbReference>
<dbReference type="PROSITE" id="PS51331">
    <property type="entry name" value="THYX"/>
    <property type="match status" value="2"/>
</dbReference>